<comment type="function">
    <text evidence="1">Catalyzes the interconversion of methylthioribose-1-phosphate (MTR-1-P) into methylthioribulose-1-phosphate (MTRu-1-P).</text>
</comment>
<comment type="catalytic activity">
    <reaction evidence="1">
        <text>5-(methylsulfanyl)-alpha-D-ribose 1-phosphate = 5-(methylsulfanyl)-D-ribulose 1-phosphate</text>
        <dbReference type="Rhea" id="RHEA:19989"/>
        <dbReference type="ChEBI" id="CHEBI:58533"/>
        <dbReference type="ChEBI" id="CHEBI:58548"/>
        <dbReference type="EC" id="5.3.1.23"/>
    </reaction>
</comment>
<comment type="pathway">
    <text evidence="1">Amino-acid biosynthesis; L-methionine biosynthesis via salvage pathway; L-methionine from S-methyl-5-thio-alpha-D-ribose 1-phosphate: step 1/6.</text>
</comment>
<comment type="similarity">
    <text evidence="2">Belongs to the eIF-2B alpha/beta/delta subunits family. MtnA subfamily.</text>
</comment>
<proteinExistence type="inferred from homology"/>
<protein>
    <recommendedName>
        <fullName evidence="1">Methylthioribose-1-phosphate isomerase</fullName>
        <shortName evidence="1">M1Pi</shortName>
        <shortName evidence="1">MTR-1-P isomerase</shortName>
        <ecNumber evidence="1">5.3.1.23</ecNumber>
    </recommendedName>
    <alternativeName>
        <fullName evidence="1">S-methyl-5-thioribose-1-phosphate isomerase</fullName>
    </alternativeName>
</protein>
<name>MTNA_ACAM1</name>
<dbReference type="EC" id="5.3.1.23" evidence="1"/>
<dbReference type="EMBL" id="CP000828">
    <property type="protein sequence ID" value="ABW30147.1"/>
    <property type="molecule type" value="Genomic_DNA"/>
</dbReference>
<dbReference type="RefSeq" id="WP_012165408.1">
    <property type="nucleotide sequence ID" value="NC_009925.1"/>
</dbReference>
<dbReference type="SMR" id="B0C8J2"/>
<dbReference type="STRING" id="329726.AM1_5185"/>
<dbReference type="KEGG" id="amr:AM1_5185"/>
<dbReference type="eggNOG" id="COG0182">
    <property type="taxonomic scope" value="Bacteria"/>
</dbReference>
<dbReference type="HOGENOM" id="CLU_016218_1_2_3"/>
<dbReference type="OrthoDB" id="9803436at2"/>
<dbReference type="UniPathway" id="UPA00904">
    <property type="reaction ID" value="UER00874"/>
</dbReference>
<dbReference type="Proteomes" id="UP000000268">
    <property type="component" value="Chromosome"/>
</dbReference>
<dbReference type="GO" id="GO:0046523">
    <property type="term" value="F:S-methyl-5-thioribose-1-phosphate isomerase activity"/>
    <property type="evidence" value="ECO:0007669"/>
    <property type="project" value="UniProtKB-UniRule"/>
</dbReference>
<dbReference type="GO" id="GO:0019509">
    <property type="term" value="P:L-methionine salvage from methylthioadenosine"/>
    <property type="evidence" value="ECO:0007669"/>
    <property type="project" value="UniProtKB-UniRule"/>
</dbReference>
<dbReference type="FunFam" id="1.20.120.420:FF:000003">
    <property type="entry name" value="Methylthioribose-1-phosphate isomerase"/>
    <property type="match status" value="1"/>
</dbReference>
<dbReference type="FunFam" id="3.40.50.10470:FF:000006">
    <property type="entry name" value="Methylthioribose-1-phosphate isomerase"/>
    <property type="match status" value="1"/>
</dbReference>
<dbReference type="Gene3D" id="1.20.120.420">
    <property type="entry name" value="translation initiation factor eif-2b, domain 1"/>
    <property type="match status" value="1"/>
</dbReference>
<dbReference type="Gene3D" id="3.40.50.10470">
    <property type="entry name" value="Translation initiation factor eif-2b, domain 2"/>
    <property type="match status" value="1"/>
</dbReference>
<dbReference type="HAMAP" id="MF_01678">
    <property type="entry name" value="Salvage_MtnA"/>
    <property type="match status" value="1"/>
</dbReference>
<dbReference type="InterPro" id="IPR000649">
    <property type="entry name" value="IF-2B-related"/>
</dbReference>
<dbReference type="InterPro" id="IPR005251">
    <property type="entry name" value="IF-M1Pi"/>
</dbReference>
<dbReference type="InterPro" id="IPR042529">
    <property type="entry name" value="IF_2B-like_C"/>
</dbReference>
<dbReference type="InterPro" id="IPR011559">
    <property type="entry name" value="Initiation_fac_2B_a/b/d"/>
</dbReference>
<dbReference type="InterPro" id="IPR027363">
    <property type="entry name" value="M1Pi_N"/>
</dbReference>
<dbReference type="InterPro" id="IPR037171">
    <property type="entry name" value="NagB/RpiA_transferase-like"/>
</dbReference>
<dbReference type="NCBIfam" id="TIGR00524">
    <property type="entry name" value="eIF-2B_rel"/>
    <property type="match status" value="1"/>
</dbReference>
<dbReference type="NCBIfam" id="NF004326">
    <property type="entry name" value="PRK05720.1"/>
    <property type="match status" value="1"/>
</dbReference>
<dbReference type="NCBIfam" id="TIGR00512">
    <property type="entry name" value="salvage_mtnA"/>
    <property type="match status" value="1"/>
</dbReference>
<dbReference type="PANTHER" id="PTHR43475">
    <property type="entry name" value="METHYLTHIORIBOSE-1-PHOSPHATE ISOMERASE"/>
    <property type="match status" value="1"/>
</dbReference>
<dbReference type="PANTHER" id="PTHR43475:SF1">
    <property type="entry name" value="METHYLTHIORIBOSE-1-PHOSPHATE ISOMERASE"/>
    <property type="match status" value="1"/>
</dbReference>
<dbReference type="Pfam" id="PF01008">
    <property type="entry name" value="IF-2B"/>
    <property type="match status" value="1"/>
</dbReference>
<dbReference type="SUPFAM" id="SSF100950">
    <property type="entry name" value="NagB/RpiA/CoA transferase-like"/>
    <property type="match status" value="1"/>
</dbReference>
<keyword id="KW-0028">Amino-acid biosynthesis</keyword>
<keyword id="KW-0413">Isomerase</keyword>
<keyword id="KW-0486">Methionine biosynthesis</keyword>
<keyword id="KW-1185">Reference proteome</keyword>
<reference key="1">
    <citation type="journal article" date="2008" name="Proc. Natl. Acad. Sci. U.S.A.">
        <title>Niche adaptation and genome expansion in the chlorophyll d-producing cyanobacterium Acaryochloris marina.</title>
        <authorList>
            <person name="Swingley W.D."/>
            <person name="Chen M."/>
            <person name="Cheung P.C."/>
            <person name="Conrad A.L."/>
            <person name="Dejesa L.C."/>
            <person name="Hao J."/>
            <person name="Honchak B.M."/>
            <person name="Karbach L.E."/>
            <person name="Kurdoglu A."/>
            <person name="Lahiri S."/>
            <person name="Mastrian S.D."/>
            <person name="Miyashita H."/>
            <person name="Page L."/>
            <person name="Ramakrishna P."/>
            <person name="Satoh S."/>
            <person name="Sattley W.M."/>
            <person name="Shimada Y."/>
            <person name="Taylor H.L."/>
            <person name="Tomo T."/>
            <person name="Tsuchiya T."/>
            <person name="Wang Z.T."/>
            <person name="Raymond J."/>
            <person name="Mimuro M."/>
            <person name="Blankenship R.E."/>
            <person name="Touchman J.W."/>
        </authorList>
    </citation>
    <scope>NUCLEOTIDE SEQUENCE [LARGE SCALE GENOMIC DNA]</scope>
    <source>
        <strain>MBIC 11017</strain>
    </source>
</reference>
<gene>
    <name evidence="1" type="primary">mtnA</name>
    <name type="ordered locus">AM1_5185</name>
</gene>
<sequence length="355" mass="38036">MTASVANPVYPVVWRGDHVELIDQTRLPQQFSVVEIRRSEDMATAIKTMIVRGAPAIGVAAAYGMYLGSCEVTTDNRDGFLSELAGVGDTLKATRPTAVNLFWAVDRMLKVARQTLGPISQIQDQLLTTAQEIGADDVRTCKAIGDHGLSVLPKDPEKLCLLTHCNAGALATAGYGTALGVVRSAWTAGRLARVYADETRPRLQGAKLTTWECVQEEIPVTLISDGMAAHCMQQNLIDVVVVGADRIAANGDAANKIGTYSVALCAKAHNLPFYVAAPLSTIDFDLADGGGIPIEERHPSEIYQIGTTDICPKGVEFYNPAFDVTPAELITGIITEHGVFAPGDIREKLSHHRSA</sequence>
<feature type="chain" id="PRO_0000357130" description="Methylthioribose-1-phosphate isomerase">
    <location>
        <begin position="1"/>
        <end position="355"/>
    </location>
</feature>
<feature type="active site" description="Proton donor" evidence="1">
    <location>
        <position position="245"/>
    </location>
</feature>
<feature type="binding site" evidence="1">
    <location>
        <begin position="52"/>
        <end position="54"/>
    </location>
    <ligand>
        <name>substrate</name>
    </ligand>
</feature>
<feature type="binding site" evidence="1">
    <location>
        <position position="95"/>
    </location>
    <ligand>
        <name>substrate</name>
    </ligand>
</feature>
<feature type="binding site" evidence="1">
    <location>
        <position position="204"/>
    </location>
    <ligand>
        <name>substrate</name>
    </ligand>
</feature>
<feature type="binding site" evidence="1">
    <location>
        <begin position="255"/>
        <end position="256"/>
    </location>
    <ligand>
        <name>substrate</name>
    </ligand>
</feature>
<feature type="site" description="Transition state stabilizer" evidence="1">
    <location>
        <position position="165"/>
    </location>
</feature>
<evidence type="ECO:0000255" key="1">
    <source>
        <dbReference type="HAMAP-Rule" id="MF_01678"/>
    </source>
</evidence>
<evidence type="ECO:0000305" key="2"/>
<accession>B0C8J2</accession>
<organism>
    <name type="scientific">Acaryochloris marina (strain MBIC 11017)</name>
    <dbReference type="NCBI Taxonomy" id="329726"/>
    <lineage>
        <taxon>Bacteria</taxon>
        <taxon>Bacillati</taxon>
        <taxon>Cyanobacteriota</taxon>
        <taxon>Cyanophyceae</taxon>
        <taxon>Acaryochloridales</taxon>
        <taxon>Acaryochloridaceae</taxon>
        <taxon>Acaryochloris</taxon>
    </lineage>
</organism>